<keyword id="KW-0413">Isomerase</keyword>
<keyword id="KW-0819">tRNA processing</keyword>
<reference key="1">
    <citation type="journal article" date="2008" name="PLoS Genet.">
        <title>Complete genome sequence of the N2-fixing broad host range endophyte Klebsiella pneumoniae 342 and virulence predictions verified in mice.</title>
        <authorList>
            <person name="Fouts D.E."/>
            <person name="Tyler H.L."/>
            <person name="DeBoy R.T."/>
            <person name="Daugherty S."/>
            <person name="Ren Q."/>
            <person name="Badger J.H."/>
            <person name="Durkin A.S."/>
            <person name="Huot H."/>
            <person name="Shrivastava S."/>
            <person name="Kothari S."/>
            <person name="Dodson R.J."/>
            <person name="Mohamoud Y."/>
            <person name="Khouri H."/>
            <person name="Roesch L.F.W."/>
            <person name="Krogfelt K.A."/>
            <person name="Struve C."/>
            <person name="Triplett E.W."/>
            <person name="Methe B.A."/>
        </authorList>
    </citation>
    <scope>NUCLEOTIDE SEQUENCE [LARGE SCALE GENOMIC DNA]</scope>
    <source>
        <strain>342</strain>
    </source>
</reference>
<sequence length="270" mass="30346">MSEMEQQPIFKIALGIEYDGSKYYGWQRQNEVRSVQEKLEKALSQVANEPITVFCAGRTDAGVHGTGQVVHFETRAQRKDAAWTLGVNANLPGDIAVRWVKHVPADFHARFSATARRYRYVIYNHRLRPAVLSHGVTHFHQPLDAERMQRAAQCLLGENDFTSFRAVQCQSRTPWRNVMHINVTRYGAYVVVDIKANAFVHHMVRNIVGSLMEVGAGNQPESWMAELLAAKDRTLAAATAKAEGLYLVSVDYPAHYDLPVLPMGPLFLAD</sequence>
<comment type="function">
    <text evidence="1">Formation of pseudouridine at positions 38, 39 and 40 in the anticodon stem and loop of transfer RNAs.</text>
</comment>
<comment type="catalytic activity">
    <reaction evidence="1">
        <text>uridine(38/39/40) in tRNA = pseudouridine(38/39/40) in tRNA</text>
        <dbReference type="Rhea" id="RHEA:22376"/>
        <dbReference type="Rhea" id="RHEA-COMP:10085"/>
        <dbReference type="Rhea" id="RHEA-COMP:10087"/>
        <dbReference type="ChEBI" id="CHEBI:65314"/>
        <dbReference type="ChEBI" id="CHEBI:65315"/>
        <dbReference type="EC" id="5.4.99.12"/>
    </reaction>
</comment>
<comment type="subunit">
    <text evidence="1">Homodimer.</text>
</comment>
<comment type="similarity">
    <text evidence="1">Belongs to the tRNA pseudouridine synthase TruA family.</text>
</comment>
<organism>
    <name type="scientific">Klebsiella pneumoniae (strain 342)</name>
    <dbReference type="NCBI Taxonomy" id="507522"/>
    <lineage>
        <taxon>Bacteria</taxon>
        <taxon>Pseudomonadati</taxon>
        <taxon>Pseudomonadota</taxon>
        <taxon>Gammaproteobacteria</taxon>
        <taxon>Enterobacterales</taxon>
        <taxon>Enterobacteriaceae</taxon>
        <taxon>Klebsiella/Raoultella group</taxon>
        <taxon>Klebsiella</taxon>
        <taxon>Klebsiella pneumoniae complex</taxon>
    </lineage>
</organism>
<feature type="chain" id="PRO_1000097751" description="tRNA pseudouridine synthase A">
    <location>
        <begin position="1"/>
        <end position="270"/>
    </location>
</feature>
<feature type="region of interest" description="RNA binding" evidence="1">
    <location>
        <begin position="107"/>
        <end position="111"/>
    </location>
</feature>
<feature type="region of interest" description="Interaction with tRNA" evidence="1">
    <location>
        <begin position="168"/>
        <end position="172"/>
    </location>
</feature>
<feature type="active site" description="Nucleophile" evidence="1">
    <location>
        <position position="60"/>
    </location>
</feature>
<feature type="binding site" evidence="1">
    <location>
        <position position="118"/>
    </location>
    <ligand>
        <name>substrate</name>
    </ligand>
</feature>
<feature type="site" description="Interaction with tRNA; Important for base-flipping" evidence="1">
    <location>
        <position position="58"/>
    </location>
</feature>
<feature type="site" description="Interaction with tRNA" evidence="1">
    <location>
        <position position="78"/>
    </location>
</feature>
<feature type="site" description="Interaction with tRNA" evidence="1">
    <location>
        <position position="110"/>
    </location>
</feature>
<feature type="site" description="Interaction with tRNA" evidence="1">
    <location>
        <position position="126"/>
    </location>
</feature>
<feature type="site" description="Interaction with tRNA" evidence="1">
    <location>
        <position position="139"/>
    </location>
</feature>
<evidence type="ECO:0000255" key="1">
    <source>
        <dbReference type="HAMAP-Rule" id="MF_00171"/>
    </source>
</evidence>
<proteinExistence type="inferred from homology"/>
<gene>
    <name evidence="1" type="primary">truA</name>
    <name type="ordered locus">KPK_1436</name>
</gene>
<name>TRUA_KLEP3</name>
<protein>
    <recommendedName>
        <fullName evidence="1">tRNA pseudouridine synthase A</fullName>
        <ecNumber evidence="1">5.4.99.12</ecNumber>
    </recommendedName>
    <alternativeName>
        <fullName evidence="1">tRNA pseudouridine(38-40) synthase</fullName>
    </alternativeName>
    <alternativeName>
        <fullName evidence="1">tRNA pseudouridylate synthase I</fullName>
    </alternativeName>
    <alternativeName>
        <fullName evidence="1">tRNA-uridine isomerase I</fullName>
    </alternativeName>
</protein>
<accession>B5XNR9</accession>
<dbReference type="EC" id="5.4.99.12" evidence="1"/>
<dbReference type="EMBL" id="CP000964">
    <property type="protein sequence ID" value="ACI11308.1"/>
    <property type="molecule type" value="Genomic_DNA"/>
</dbReference>
<dbReference type="SMR" id="B5XNR9"/>
<dbReference type="KEGG" id="kpe:KPK_1436"/>
<dbReference type="HOGENOM" id="CLU_014673_0_2_6"/>
<dbReference type="Proteomes" id="UP000001734">
    <property type="component" value="Chromosome"/>
</dbReference>
<dbReference type="GO" id="GO:0003723">
    <property type="term" value="F:RNA binding"/>
    <property type="evidence" value="ECO:0007669"/>
    <property type="project" value="InterPro"/>
</dbReference>
<dbReference type="GO" id="GO:0160147">
    <property type="term" value="F:tRNA pseudouridine(38-40) synthase activity"/>
    <property type="evidence" value="ECO:0007669"/>
    <property type="project" value="UniProtKB-EC"/>
</dbReference>
<dbReference type="GO" id="GO:0031119">
    <property type="term" value="P:tRNA pseudouridine synthesis"/>
    <property type="evidence" value="ECO:0007669"/>
    <property type="project" value="UniProtKB-UniRule"/>
</dbReference>
<dbReference type="CDD" id="cd02570">
    <property type="entry name" value="PseudoU_synth_EcTruA"/>
    <property type="match status" value="1"/>
</dbReference>
<dbReference type="FunFam" id="3.30.70.580:FF:000001">
    <property type="entry name" value="tRNA pseudouridine synthase A"/>
    <property type="match status" value="1"/>
</dbReference>
<dbReference type="FunFam" id="3.30.70.660:FF:000001">
    <property type="entry name" value="tRNA pseudouridine synthase A"/>
    <property type="match status" value="1"/>
</dbReference>
<dbReference type="Gene3D" id="3.30.70.660">
    <property type="entry name" value="Pseudouridine synthase I, catalytic domain, C-terminal subdomain"/>
    <property type="match status" value="1"/>
</dbReference>
<dbReference type="Gene3D" id="3.30.70.580">
    <property type="entry name" value="Pseudouridine synthase I, catalytic domain, N-terminal subdomain"/>
    <property type="match status" value="1"/>
</dbReference>
<dbReference type="HAMAP" id="MF_00171">
    <property type="entry name" value="TruA"/>
    <property type="match status" value="1"/>
</dbReference>
<dbReference type="InterPro" id="IPR020103">
    <property type="entry name" value="PsdUridine_synth_cat_dom_sf"/>
</dbReference>
<dbReference type="InterPro" id="IPR001406">
    <property type="entry name" value="PsdUridine_synth_TruA"/>
</dbReference>
<dbReference type="InterPro" id="IPR020097">
    <property type="entry name" value="PsdUridine_synth_TruA_a/b_dom"/>
</dbReference>
<dbReference type="InterPro" id="IPR020095">
    <property type="entry name" value="PsdUridine_synth_TruA_C"/>
</dbReference>
<dbReference type="InterPro" id="IPR020094">
    <property type="entry name" value="TruA/RsuA/RluB/E/F_N"/>
</dbReference>
<dbReference type="NCBIfam" id="TIGR00071">
    <property type="entry name" value="hisT_truA"/>
    <property type="match status" value="1"/>
</dbReference>
<dbReference type="PANTHER" id="PTHR11142">
    <property type="entry name" value="PSEUDOURIDYLATE SYNTHASE"/>
    <property type="match status" value="1"/>
</dbReference>
<dbReference type="PANTHER" id="PTHR11142:SF0">
    <property type="entry name" value="TRNA PSEUDOURIDINE SYNTHASE-LIKE 1"/>
    <property type="match status" value="1"/>
</dbReference>
<dbReference type="Pfam" id="PF01416">
    <property type="entry name" value="PseudoU_synth_1"/>
    <property type="match status" value="2"/>
</dbReference>
<dbReference type="PIRSF" id="PIRSF001430">
    <property type="entry name" value="tRNA_psdUrid_synth"/>
    <property type="match status" value="1"/>
</dbReference>
<dbReference type="SUPFAM" id="SSF55120">
    <property type="entry name" value="Pseudouridine synthase"/>
    <property type="match status" value="1"/>
</dbReference>